<accession>Q5HQ34</accession>
<dbReference type="EC" id="3.1.26.4" evidence="1"/>
<dbReference type="EMBL" id="CP000029">
    <property type="protein sequence ID" value="AAW54089.1"/>
    <property type="molecule type" value="Genomic_DNA"/>
</dbReference>
<dbReference type="RefSeq" id="WP_002446206.1">
    <property type="nucleotide sequence ID" value="NC_002976.3"/>
</dbReference>
<dbReference type="SMR" id="Q5HQ34"/>
<dbReference type="STRING" id="176279.SERP0723"/>
<dbReference type="KEGG" id="ser:SERP0723"/>
<dbReference type="eggNOG" id="COG1039">
    <property type="taxonomic scope" value="Bacteria"/>
</dbReference>
<dbReference type="HOGENOM" id="CLU_059546_1_0_9"/>
<dbReference type="Proteomes" id="UP000000531">
    <property type="component" value="Chromosome"/>
</dbReference>
<dbReference type="GO" id="GO:0005737">
    <property type="term" value="C:cytoplasm"/>
    <property type="evidence" value="ECO:0007669"/>
    <property type="project" value="UniProtKB-SubCell"/>
</dbReference>
<dbReference type="GO" id="GO:0032299">
    <property type="term" value="C:ribonuclease H2 complex"/>
    <property type="evidence" value="ECO:0007669"/>
    <property type="project" value="TreeGrafter"/>
</dbReference>
<dbReference type="GO" id="GO:0000287">
    <property type="term" value="F:magnesium ion binding"/>
    <property type="evidence" value="ECO:0007669"/>
    <property type="project" value="UniProtKB-UniRule"/>
</dbReference>
<dbReference type="GO" id="GO:0003723">
    <property type="term" value="F:RNA binding"/>
    <property type="evidence" value="ECO:0007669"/>
    <property type="project" value="InterPro"/>
</dbReference>
<dbReference type="GO" id="GO:0004523">
    <property type="term" value="F:RNA-DNA hybrid ribonuclease activity"/>
    <property type="evidence" value="ECO:0007669"/>
    <property type="project" value="UniProtKB-UniRule"/>
</dbReference>
<dbReference type="GO" id="GO:0043137">
    <property type="term" value="P:DNA replication, removal of RNA primer"/>
    <property type="evidence" value="ECO:0007669"/>
    <property type="project" value="TreeGrafter"/>
</dbReference>
<dbReference type="GO" id="GO:0006298">
    <property type="term" value="P:mismatch repair"/>
    <property type="evidence" value="ECO:0007669"/>
    <property type="project" value="TreeGrafter"/>
</dbReference>
<dbReference type="CDD" id="cd06590">
    <property type="entry name" value="RNase_HII_bacteria_HIII_like"/>
    <property type="match status" value="1"/>
</dbReference>
<dbReference type="CDD" id="cd14796">
    <property type="entry name" value="RNAse_HIII_N"/>
    <property type="match status" value="1"/>
</dbReference>
<dbReference type="FunFam" id="3.30.420.10:FF:000047">
    <property type="entry name" value="Ribonuclease HIII"/>
    <property type="match status" value="1"/>
</dbReference>
<dbReference type="Gene3D" id="3.30.420.10">
    <property type="entry name" value="Ribonuclease H-like superfamily/Ribonuclease H"/>
    <property type="match status" value="1"/>
</dbReference>
<dbReference type="Gene3D" id="3.30.310.10">
    <property type="entry name" value="TATA-Binding Protein"/>
    <property type="match status" value="1"/>
</dbReference>
<dbReference type="HAMAP" id="MF_00053">
    <property type="entry name" value="RNase_HIII"/>
    <property type="match status" value="1"/>
</dbReference>
<dbReference type="InterPro" id="IPR001352">
    <property type="entry name" value="RNase_HII/HIII"/>
</dbReference>
<dbReference type="InterPro" id="IPR024567">
    <property type="entry name" value="RNase_HII/HIII_dom"/>
</dbReference>
<dbReference type="InterPro" id="IPR004641">
    <property type="entry name" value="RNase_HIII"/>
</dbReference>
<dbReference type="InterPro" id="IPR024568">
    <property type="entry name" value="RNase_HIII_N"/>
</dbReference>
<dbReference type="InterPro" id="IPR012337">
    <property type="entry name" value="RNaseH-like_sf"/>
</dbReference>
<dbReference type="InterPro" id="IPR036397">
    <property type="entry name" value="RNaseH_sf"/>
</dbReference>
<dbReference type="InterPro" id="IPR012295">
    <property type="entry name" value="TBP_dom_sf"/>
</dbReference>
<dbReference type="NCBIfam" id="TIGR00716">
    <property type="entry name" value="rnhC"/>
    <property type="match status" value="1"/>
</dbReference>
<dbReference type="PANTHER" id="PTHR10954:SF23">
    <property type="entry name" value="RIBONUCLEASE"/>
    <property type="match status" value="1"/>
</dbReference>
<dbReference type="PANTHER" id="PTHR10954">
    <property type="entry name" value="RIBONUCLEASE H2 SUBUNIT A"/>
    <property type="match status" value="1"/>
</dbReference>
<dbReference type="Pfam" id="PF11858">
    <property type="entry name" value="DUF3378"/>
    <property type="match status" value="1"/>
</dbReference>
<dbReference type="Pfam" id="PF01351">
    <property type="entry name" value="RNase_HII"/>
    <property type="match status" value="1"/>
</dbReference>
<dbReference type="PIRSF" id="PIRSF037748">
    <property type="entry name" value="RnhC"/>
    <property type="match status" value="1"/>
</dbReference>
<dbReference type="SUPFAM" id="SSF53098">
    <property type="entry name" value="Ribonuclease H-like"/>
    <property type="match status" value="1"/>
</dbReference>
<dbReference type="PROSITE" id="PS51975">
    <property type="entry name" value="RNASE_H_2"/>
    <property type="match status" value="1"/>
</dbReference>
<name>RNH3_STAEQ</name>
<feature type="chain" id="PRO_0000111698" description="Ribonuclease HIII">
    <location>
        <begin position="1"/>
        <end position="308"/>
    </location>
</feature>
<feature type="domain" description="RNase H type-2" evidence="2">
    <location>
        <begin position="88"/>
        <end position="304"/>
    </location>
</feature>
<feature type="binding site" evidence="1">
    <location>
        <position position="94"/>
    </location>
    <ligand>
        <name>a divalent metal cation</name>
        <dbReference type="ChEBI" id="CHEBI:60240"/>
    </ligand>
</feature>
<feature type="binding site" evidence="1">
    <location>
        <position position="95"/>
    </location>
    <ligand>
        <name>a divalent metal cation</name>
        <dbReference type="ChEBI" id="CHEBI:60240"/>
    </ligand>
</feature>
<feature type="binding site" evidence="1">
    <location>
        <position position="199"/>
    </location>
    <ligand>
        <name>a divalent metal cation</name>
        <dbReference type="ChEBI" id="CHEBI:60240"/>
    </ligand>
</feature>
<gene>
    <name evidence="1" type="primary">rnhC</name>
    <name type="ordered locus">SERP0723</name>
</gene>
<evidence type="ECO:0000255" key="1">
    <source>
        <dbReference type="HAMAP-Rule" id="MF_00053"/>
    </source>
</evidence>
<evidence type="ECO:0000255" key="2">
    <source>
        <dbReference type="PROSITE-ProRule" id="PRU01319"/>
    </source>
</evidence>
<reference key="1">
    <citation type="journal article" date="2005" name="J. Bacteriol.">
        <title>Insights on evolution of virulence and resistance from the complete genome analysis of an early methicillin-resistant Staphylococcus aureus strain and a biofilm-producing methicillin-resistant Staphylococcus epidermidis strain.</title>
        <authorList>
            <person name="Gill S.R."/>
            <person name="Fouts D.E."/>
            <person name="Archer G.L."/>
            <person name="Mongodin E.F."/>
            <person name="DeBoy R.T."/>
            <person name="Ravel J."/>
            <person name="Paulsen I.T."/>
            <person name="Kolonay J.F."/>
            <person name="Brinkac L.M."/>
            <person name="Beanan M.J."/>
            <person name="Dodson R.J."/>
            <person name="Daugherty S.C."/>
            <person name="Madupu R."/>
            <person name="Angiuoli S.V."/>
            <person name="Durkin A.S."/>
            <person name="Haft D.H."/>
            <person name="Vamathevan J.J."/>
            <person name="Khouri H."/>
            <person name="Utterback T.R."/>
            <person name="Lee C."/>
            <person name="Dimitrov G."/>
            <person name="Jiang L."/>
            <person name="Qin H."/>
            <person name="Weidman J."/>
            <person name="Tran K."/>
            <person name="Kang K.H."/>
            <person name="Hance I.R."/>
            <person name="Nelson K.E."/>
            <person name="Fraser C.M."/>
        </authorList>
    </citation>
    <scope>NUCLEOTIDE SEQUENCE [LARGE SCALE GENOMIC DNA]</scope>
    <source>
        <strain>ATCC 35984 / DSM 28319 / BCRC 17069 / CCUG 31568 / BM 3577 / RP62A</strain>
    </source>
</reference>
<proteinExistence type="inferred from homology"/>
<keyword id="KW-0963">Cytoplasm</keyword>
<keyword id="KW-0255">Endonuclease</keyword>
<keyword id="KW-0378">Hydrolase</keyword>
<keyword id="KW-0460">Magnesium</keyword>
<keyword id="KW-0479">Metal-binding</keyword>
<keyword id="KW-0540">Nuclease</keyword>
<keyword id="KW-1185">Reference proteome</keyword>
<protein>
    <recommendedName>
        <fullName evidence="1">Ribonuclease HIII</fullName>
        <shortName evidence="1">RNase HIII</shortName>
        <ecNumber evidence="1">3.1.26.4</ecNumber>
    </recommendedName>
</protein>
<comment type="function">
    <text evidence="1">Endonuclease that specifically degrades the RNA of RNA-DNA hybrids.</text>
</comment>
<comment type="catalytic activity">
    <reaction evidence="1">
        <text>Endonucleolytic cleavage to 5'-phosphomonoester.</text>
        <dbReference type="EC" id="3.1.26.4"/>
    </reaction>
</comment>
<comment type="cofactor">
    <cofactor evidence="1">
        <name>Mn(2+)</name>
        <dbReference type="ChEBI" id="CHEBI:29035"/>
    </cofactor>
    <cofactor evidence="1">
        <name>Mg(2+)</name>
        <dbReference type="ChEBI" id="CHEBI:18420"/>
    </cofactor>
    <text evidence="1">Manganese or magnesium. Binds 1 divalent metal ion per monomer in the absence of substrate. May bind a second metal ion after substrate binding.</text>
</comment>
<comment type="subcellular location">
    <subcellularLocation>
        <location evidence="1">Cytoplasm</location>
    </subcellularLocation>
</comment>
<comment type="similarity">
    <text evidence="1">Belongs to the RNase HII family. RnhC subfamily.</text>
</comment>
<sequence>MGNVVYKLTSKEIQSLMAQTTFETTKLPQGMKARTRYQNTVINIYSSGKVMFQGKNAEQVASQLLPDKQSTTGKHTSSNTTSIQYNHFHCIGSDEAGSGDYFGPLTVCAAYVSQSHIKILKELGVDDSKKLNDTKIVDLAEQLITFIPHSLLTLDNVKYNERQSLGWSQVKMKAVLHNEAIKNVIQKIEQDQLDYIVIDQFAKREVYQHYALSALPFPDKTKFETKGESKSLAIATASIISRYAFVKHMDHISKKLHMEIPKGASNKVDLIAAKVIQKYDIQQLDTISKKHFKNRDKAIHLINQKYNK</sequence>
<organism>
    <name type="scientific">Staphylococcus epidermidis (strain ATCC 35984 / DSM 28319 / BCRC 17069 / CCUG 31568 / BM 3577 / RP62A)</name>
    <dbReference type="NCBI Taxonomy" id="176279"/>
    <lineage>
        <taxon>Bacteria</taxon>
        <taxon>Bacillati</taxon>
        <taxon>Bacillota</taxon>
        <taxon>Bacilli</taxon>
        <taxon>Bacillales</taxon>
        <taxon>Staphylococcaceae</taxon>
        <taxon>Staphylococcus</taxon>
    </lineage>
</organism>